<protein>
    <recommendedName>
        <fullName evidence="2">MSDIN-like toxin proprotein a</fullName>
    </recommendedName>
    <component>
        <recommendedName>
            <fullName evidence="4">Toxin MSD1</fullName>
        </recommendedName>
        <alternativeName>
            <fullName evidence="2">Toxin MSDa</fullName>
        </alternativeName>
    </component>
</protein>
<sequence length="32" mass="3421">MSDINATRLPIIGILLPPCIGDDVTLLLTRGE</sequence>
<dbReference type="EMBL" id="EU196157">
    <property type="protein sequence ID" value="ABW87786.1"/>
    <property type="molecule type" value="Genomic_DNA"/>
</dbReference>
<dbReference type="SMR" id="A8W7P2"/>
<dbReference type="GO" id="GO:0090729">
    <property type="term" value="F:toxin activity"/>
    <property type="evidence" value="ECO:0007669"/>
    <property type="project" value="UniProtKB-KW"/>
</dbReference>
<dbReference type="InterPro" id="IPR027582">
    <property type="entry name" value="Amanitin/phalloidin"/>
</dbReference>
<dbReference type="NCBIfam" id="TIGR04309">
    <property type="entry name" value="amanitin"/>
    <property type="match status" value="1"/>
</dbReference>
<evidence type="ECO:0000250" key="1">
    <source>
        <dbReference type="UniProtKB" id="A0A067SLB9"/>
    </source>
</evidence>
<evidence type="ECO:0000303" key="2">
    <source>
    </source>
</evidence>
<evidence type="ECO:0000305" key="3"/>
<evidence type="ECO:0000305" key="4">
    <source>
    </source>
</evidence>
<comment type="function">
    <text evidence="4">Probable toxin that belongs to the MSDIN-like toxin family responsible for a large number of food poisoning cases and deaths (PubMed:18025465).</text>
</comment>
<comment type="PTM">
    <text evidence="1">Processed by the macrocyclase-peptidase enzyme POPB to yield a toxic cyclic octapeptide (By similarity). POPB first removes 10 residues from the N-terminus (By similarity). Conformational trapping of the remaining peptide forces the enzyme to release this intermediate rather than proceed to macrocyclization (By similarity). The enzyme rebinds the remaining peptide in a different conformation and catalyzes macrocyclization of the N-terminal 8 residues (By similarity).</text>
</comment>
<comment type="similarity">
    <text evidence="3">Belongs to the MSDIN fungal toxin family.</text>
</comment>
<reference key="1">
    <citation type="journal article" date="2007" name="Proc. Natl. Acad. Sci. U.S.A.">
        <title>Gene family encoding the major toxins of lethal Amanita mushrooms.</title>
        <authorList>
            <person name="Hallen H.E."/>
            <person name="Luo H."/>
            <person name="Scott-Craig J.S."/>
            <person name="Walton J.D."/>
        </authorList>
    </citation>
    <scope>NUCLEOTIDE SEQUENCE [GENOMIC DNA]</scope>
    <scope>FUNCTION</scope>
</reference>
<organism>
    <name type="scientific">Amanita phalloides</name>
    <name type="common">Death cap</name>
    <dbReference type="NCBI Taxonomy" id="67723"/>
    <lineage>
        <taxon>Eukaryota</taxon>
        <taxon>Fungi</taxon>
        <taxon>Dikarya</taxon>
        <taxon>Basidiomycota</taxon>
        <taxon>Agaricomycotina</taxon>
        <taxon>Agaricomycetes</taxon>
        <taxon>Agaricomycetidae</taxon>
        <taxon>Agaricales</taxon>
        <taxon>Pluteineae</taxon>
        <taxon>Amanitaceae</taxon>
        <taxon>Amanita</taxon>
    </lineage>
</organism>
<gene>
    <name evidence="2" type="primary">MSDa</name>
</gene>
<name>MSD1_AMAPH</name>
<feature type="propeptide" id="PRO_0000443671" evidence="4">
    <location>
        <begin position="1"/>
        <end position="10"/>
    </location>
</feature>
<feature type="peptide" id="PRO_0000443672" description="Toxin MSD1" evidence="4">
    <location>
        <begin position="11"/>
        <end position="18"/>
    </location>
</feature>
<feature type="propeptide" id="PRO_0000443673" evidence="4">
    <location>
        <begin position="19"/>
        <end position="32"/>
    </location>
</feature>
<feature type="cross-link" description="Cyclopeptide (Ile-Pro)" evidence="4">
    <location>
        <begin position="11"/>
        <end position="18"/>
    </location>
</feature>
<feature type="non-terminal residue" evidence="3">
    <location>
        <position position="32"/>
    </location>
</feature>
<accession>A8W7P2</accession>
<keyword id="KW-0800">Toxin</keyword>
<proteinExistence type="inferred from homology"/>